<name>RL20_ELUMP</name>
<feature type="chain" id="PRO_1000193958" description="Large ribosomal subunit protein bL20">
    <location>
        <begin position="1"/>
        <end position="118"/>
    </location>
</feature>
<gene>
    <name evidence="1" type="primary">rplT</name>
    <name type="ordered locus">Emin_0348</name>
</gene>
<sequence>MRIKFSVARHARKKKVLKRASGYYGDKSRRLRMATQQVDKSLVHAYTGRKDKKHQYRQLWITRINAAVREEGLNYSNFINGLAKSNITLNRKMLSEMAIQDPLSFKKLVDVAKQAIAK</sequence>
<evidence type="ECO:0000255" key="1">
    <source>
        <dbReference type="HAMAP-Rule" id="MF_00382"/>
    </source>
</evidence>
<evidence type="ECO:0000305" key="2"/>
<keyword id="KW-1185">Reference proteome</keyword>
<keyword id="KW-0687">Ribonucleoprotein</keyword>
<keyword id="KW-0689">Ribosomal protein</keyword>
<keyword id="KW-0694">RNA-binding</keyword>
<keyword id="KW-0699">rRNA-binding</keyword>
<proteinExistence type="inferred from homology"/>
<reference key="1">
    <citation type="journal article" date="2009" name="Appl. Environ. Microbiol.">
        <title>Genomic analysis of 'Elusimicrobium minutum,' the first cultivated representative of the phylum 'Elusimicrobia' (formerly termite group 1).</title>
        <authorList>
            <person name="Herlemann D.P.R."/>
            <person name="Geissinger O."/>
            <person name="Ikeda-Ohtsubo W."/>
            <person name="Kunin V."/>
            <person name="Sun H."/>
            <person name="Lapidus A."/>
            <person name="Hugenholtz P."/>
            <person name="Brune A."/>
        </authorList>
    </citation>
    <scope>NUCLEOTIDE SEQUENCE [LARGE SCALE GENOMIC DNA]</scope>
    <source>
        <strain>Pei191</strain>
    </source>
</reference>
<protein>
    <recommendedName>
        <fullName evidence="1">Large ribosomal subunit protein bL20</fullName>
    </recommendedName>
    <alternativeName>
        <fullName evidence="2">50S ribosomal protein L20</fullName>
    </alternativeName>
</protein>
<organism>
    <name type="scientific">Elusimicrobium minutum (strain Pei191)</name>
    <dbReference type="NCBI Taxonomy" id="445932"/>
    <lineage>
        <taxon>Bacteria</taxon>
        <taxon>Pseudomonadati</taxon>
        <taxon>Elusimicrobiota</taxon>
        <taxon>Elusimicrobia</taxon>
        <taxon>Elusimicrobiales</taxon>
        <taxon>Elusimicrobiaceae</taxon>
        <taxon>Elusimicrobium</taxon>
    </lineage>
</organism>
<accession>B2KB85</accession>
<dbReference type="EMBL" id="CP001055">
    <property type="protein sequence ID" value="ACC97907.1"/>
    <property type="molecule type" value="Genomic_DNA"/>
</dbReference>
<dbReference type="RefSeq" id="WP_012414522.1">
    <property type="nucleotide sequence ID" value="NC_010644.1"/>
</dbReference>
<dbReference type="SMR" id="B2KB85"/>
<dbReference type="STRING" id="445932.Emin_0348"/>
<dbReference type="KEGG" id="emi:Emin_0348"/>
<dbReference type="HOGENOM" id="CLU_123265_0_1_0"/>
<dbReference type="OrthoDB" id="9808966at2"/>
<dbReference type="Proteomes" id="UP000001029">
    <property type="component" value="Chromosome"/>
</dbReference>
<dbReference type="GO" id="GO:1990904">
    <property type="term" value="C:ribonucleoprotein complex"/>
    <property type="evidence" value="ECO:0007669"/>
    <property type="project" value="UniProtKB-KW"/>
</dbReference>
<dbReference type="GO" id="GO:0005840">
    <property type="term" value="C:ribosome"/>
    <property type="evidence" value="ECO:0007669"/>
    <property type="project" value="UniProtKB-KW"/>
</dbReference>
<dbReference type="GO" id="GO:0019843">
    <property type="term" value="F:rRNA binding"/>
    <property type="evidence" value="ECO:0007669"/>
    <property type="project" value="UniProtKB-UniRule"/>
</dbReference>
<dbReference type="GO" id="GO:0003735">
    <property type="term" value="F:structural constituent of ribosome"/>
    <property type="evidence" value="ECO:0007669"/>
    <property type="project" value="InterPro"/>
</dbReference>
<dbReference type="GO" id="GO:0000027">
    <property type="term" value="P:ribosomal large subunit assembly"/>
    <property type="evidence" value="ECO:0007669"/>
    <property type="project" value="UniProtKB-UniRule"/>
</dbReference>
<dbReference type="GO" id="GO:0006412">
    <property type="term" value="P:translation"/>
    <property type="evidence" value="ECO:0007669"/>
    <property type="project" value="InterPro"/>
</dbReference>
<dbReference type="CDD" id="cd07026">
    <property type="entry name" value="Ribosomal_L20"/>
    <property type="match status" value="1"/>
</dbReference>
<dbReference type="FunFam" id="1.10.1900.20:FF:000001">
    <property type="entry name" value="50S ribosomal protein L20"/>
    <property type="match status" value="1"/>
</dbReference>
<dbReference type="Gene3D" id="6.10.160.10">
    <property type="match status" value="1"/>
</dbReference>
<dbReference type="Gene3D" id="1.10.1900.20">
    <property type="entry name" value="Ribosomal protein L20"/>
    <property type="match status" value="1"/>
</dbReference>
<dbReference type="HAMAP" id="MF_00382">
    <property type="entry name" value="Ribosomal_bL20"/>
    <property type="match status" value="1"/>
</dbReference>
<dbReference type="InterPro" id="IPR005813">
    <property type="entry name" value="Ribosomal_bL20"/>
</dbReference>
<dbReference type="InterPro" id="IPR049946">
    <property type="entry name" value="RIBOSOMAL_L20_CS"/>
</dbReference>
<dbReference type="InterPro" id="IPR035566">
    <property type="entry name" value="Ribosomal_protein_bL20_C"/>
</dbReference>
<dbReference type="NCBIfam" id="TIGR01032">
    <property type="entry name" value="rplT_bact"/>
    <property type="match status" value="1"/>
</dbReference>
<dbReference type="PANTHER" id="PTHR10986">
    <property type="entry name" value="39S RIBOSOMAL PROTEIN L20"/>
    <property type="match status" value="1"/>
</dbReference>
<dbReference type="Pfam" id="PF00453">
    <property type="entry name" value="Ribosomal_L20"/>
    <property type="match status" value="1"/>
</dbReference>
<dbReference type="PRINTS" id="PR00062">
    <property type="entry name" value="RIBOSOMALL20"/>
</dbReference>
<dbReference type="SUPFAM" id="SSF74731">
    <property type="entry name" value="Ribosomal protein L20"/>
    <property type="match status" value="1"/>
</dbReference>
<dbReference type="PROSITE" id="PS00937">
    <property type="entry name" value="RIBOSOMAL_L20"/>
    <property type="match status" value="1"/>
</dbReference>
<comment type="function">
    <text evidence="1">Binds directly to 23S ribosomal RNA and is necessary for the in vitro assembly process of the 50S ribosomal subunit. It is not involved in the protein synthesizing functions of that subunit.</text>
</comment>
<comment type="similarity">
    <text evidence="1">Belongs to the bacterial ribosomal protein bL20 family.</text>
</comment>